<organism>
    <name type="scientific">Bifidobacterium longum subsp. infantis (strain ATCC 15697 / DSM 20088 / JCM 1222 / NCTC 11817 / S12)</name>
    <dbReference type="NCBI Taxonomy" id="391904"/>
    <lineage>
        <taxon>Bacteria</taxon>
        <taxon>Bacillati</taxon>
        <taxon>Actinomycetota</taxon>
        <taxon>Actinomycetes</taxon>
        <taxon>Bifidobacteriales</taxon>
        <taxon>Bifidobacteriaceae</taxon>
        <taxon>Bifidobacterium</taxon>
    </lineage>
</organism>
<sequence length="355" mass="38404">MSSTQFDGDIDSFVSYLKSNRGLSANTLKAYRADLTACLHLFELRGVTDLNEITLDDLRSWMAVESRDHARSSMARKTVAVRGFFAWAYEHGLTATDPAATLMTPSIPSTLPAVLTESQAEQLLDVAEHAVATNQYKDDGGAAAASGSGKAAGKTADKSADTVNRSEAPARADKRDNARVTAESQRNAAILELLYATGIRVAELVSMDIADIDFSNRTIKVTGKGNKQRVVPFGLPAQRALETWLEQGRPVLARTATDAVKSRAANALFLGARGGRIDQRIARDIVHRAAREAGVPDISPHALRHSAATHILDGGADLREVQEMLGHSSLKTTQRYTHVSIEQLKNRYGQAFPRA</sequence>
<keyword id="KW-0131">Cell cycle</keyword>
<keyword id="KW-0132">Cell division</keyword>
<keyword id="KW-0159">Chromosome partition</keyword>
<keyword id="KW-0963">Cytoplasm</keyword>
<keyword id="KW-0229">DNA integration</keyword>
<keyword id="KW-0233">DNA recombination</keyword>
<keyword id="KW-0238">DNA-binding</keyword>
<proteinExistence type="inferred from homology"/>
<dbReference type="EMBL" id="CP001095">
    <property type="protein sequence ID" value="ACJ52021.1"/>
    <property type="molecule type" value="Genomic_DNA"/>
</dbReference>
<dbReference type="EMBL" id="AP010889">
    <property type="protein sequence ID" value="BAJ68528.1"/>
    <property type="molecule type" value="Genomic_DNA"/>
</dbReference>
<dbReference type="RefSeq" id="WP_012577287.1">
    <property type="nucleotide sequence ID" value="NC_011593.1"/>
</dbReference>
<dbReference type="SMR" id="B7GQE1"/>
<dbReference type="KEGG" id="bln:Blon_0921"/>
<dbReference type="KEGG" id="blon:BLIJ_0938"/>
<dbReference type="PATRIC" id="fig|391904.8.peg.948"/>
<dbReference type="HOGENOM" id="CLU_027562_9_0_11"/>
<dbReference type="Proteomes" id="UP000001360">
    <property type="component" value="Chromosome"/>
</dbReference>
<dbReference type="GO" id="GO:0005737">
    <property type="term" value="C:cytoplasm"/>
    <property type="evidence" value="ECO:0007669"/>
    <property type="project" value="UniProtKB-SubCell"/>
</dbReference>
<dbReference type="GO" id="GO:0003677">
    <property type="term" value="F:DNA binding"/>
    <property type="evidence" value="ECO:0007669"/>
    <property type="project" value="UniProtKB-KW"/>
</dbReference>
<dbReference type="GO" id="GO:0009037">
    <property type="term" value="F:tyrosine-based site-specific recombinase activity"/>
    <property type="evidence" value="ECO:0007669"/>
    <property type="project" value="UniProtKB-UniRule"/>
</dbReference>
<dbReference type="GO" id="GO:0051301">
    <property type="term" value="P:cell division"/>
    <property type="evidence" value="ECO:0007669"/>
    <property type="project" value="UniProtKB-KW"/>
</dbReference>
<dbReference type="GO" id="GO:0007059">
    <property type="term" value="P:chromosome segregation"/>
    <property type="evidence" value="ECO:0007669"/>
    <property type="project" value="UniProtKB-UniRule"/>
</dbReference>
<dbReference type="GO" id="GO:0006313">
    <property type="term" value="P:DNA transposition"/>
    <property type="evidence" value="ECO:0007669"/>
    <property type="project" value="UniProtKB-UniRule"/>
</dbReference>
<dbReference type="CDD" id="cd00798">
    <property type="entry name" value="INT_XerDC_C"/>
    <property type="match status" value="1"/>
</dbReference>
<dbReference type="Gene3D" id="1.10.150.130">
    <property type="match status" value="1"/>
</dbReference>
<dbReference type="Gene3D" id="1.10.443.10">
    <property type="entry name" value="Intergrase catalytic core"/>
    <property type="match status" value="1"/>
</dbReference>
<dbReference type="HAMAP" id="MF_01808">
    <property type="entry name" value="Recomb_XerC_XerD"/>
    <property type="match status" value="1"/>
</dbReference>
<dbReference type="InterPro" id="IPR044068">
    <property type="entry name" value="CB"/>
</dbReference>
<dbReference type="InterPro" id="IPR011010">
    <property type="entry name" value="DNA_brk_join_enz"/>
</dbReference>
<dbReference type="InterPro" id="IPR013762">
    <property type="entry name" value="Integrase-like_cat_sf"/>
</dbReference>
<dbReference type="InterPro" id="IPR002104">
    <property type="entry name" value="Integrase_catalytic"/>
</dbReference>
<dbReference type="InterPro" id="IPR010998">
    <property type="entry name" value="Integrase_recombinase_N"/>
</dbReference>
<dbReference type="InterPro" id="IPR004107">
    <property type="entry name" value="Integrase_SAM-like_N"/>
</dbReference>
<dbReference type="InterPro" id="IPR023009">
    <property type="entry name" value="Tyrosine_recombinase_XerC/XerD"/>
</dbReference>
<dbReference type="InterPro" id="IPR050090">
    <property type="entry name" value="Tyrosine_recombinase_XerCD"/>
</dbReference>
<dbReference type="PANTHER" id="PTHR30349">
    <property type="entry name" value="PHAGE INTEGRASE-RELATED"/>
    <property type="match status" value="1"/>
</dbReference>
<dbReference type="PANTHER" id="PTHR30349:SF77">
    <property type="entry name" value="TYROSINE RECOMBINASE XERC"/>
    <property type="match status" value="1"/>
</dbReference>
<dbReference type="Pfam" id="PF02899">
    <property type="entry name" value="Phage_int_SAM_1"/>
    <property type="match status" value="1"/>
</dbReference>
<dbReference type="Pfam" id="PF00589">
    <property type="entry name" value="Phage_integrase"/>
    <property type="match status" value="1"/>
</dbReference>
<dbReference type="SUPFAM" id="SSF56349">
    <property type="entry name" value="DNA breaking-rejoining enzymes"/>
    <property type="match status" value="1"/>
</dbReference>
<dbReference type="SUPFAM" id="SSF47823">
    <property type="entry name" value="lambda integrase-like, N-terminal domain"/>
    <property type="match status" value="1"/>
</dbReference>
<dbReference type="PROSITE" id="PS51900">
    <property type="entry name" value="CB"/>
    <property type="match status" value="1"/>
</dbReference>
<dbReference type="PROSITE" id="PS51898">
    <property type="entry name" value="TYR_RECOMBINASE"/>
    <property type="match status" value="1"/>
</dbReference>
<protein>
    <recommendedName>
        <fullName evidence="1">Tyrosine recombinase XerC</fullName>
    </recommendedName>
</protein>
<gene>
    <name evidence="1" type="primary">xerC</name>
    <name type="ordered locus">Blon_0921</name>
    <name type="ordered locus">BLIJ_0938</name>
</gene>
<comment type="function">
    <text evidence="1">Site-specific tyrosine recombinase, which acts by catalyzing the cutting and rejoining of the recombining DNA molecules. The XerC-XerD complex is essential to convert dimers of the bacterial chromosome into monomers to permit their segregation at cell division. It also contributes to the segregational stability of plasmids.</text>
</comment>
<comment type="subunit">
    <text evidence="1">Forms a cyclic heterotetrameric complex composed of two molecules of XerC and two molecules of XerD.</text>
</comment>
<comment type="subcellular location">
    <subcellularLocation>
        <location evidence="1">Cytoplasm</location>
    </subcellularLocation>
</comment>
<comment type="similarity">
    <text evidence="1">Belongs to the 'phage' integrase family. XerC subfamily.</text>
</comment>
<name>XERC_BIFLS</name>
<accession>B7GQE1</accession>
<accession>E8MRA3</accession>
<evidence type="ECO:0000255" key="1">
    <source>
        <dbReference type="HAMAP-Rule" id="MF_01808"/>
    </source>
</evidence>
<evidence type="ECO:0000255" key="2">
    <source>
        <dbReference type="PROSITE-ProRule" id="PRU01246"/>
    </source>
</evidence>
<evidence type="ECO:0000255" key="3">
    <source>
        <dbReference type="PROSITE-ProRule" id="PRU01248"/>
    </source>
</evidence>
<evidence type="ECO:0000256" key="4">
    <source>
        <dbReference type="SAM" id="MobiDB-lite"/>
    </source>
</evidence>
<feature type="chain" id="PRO_1000187583" description="Tyrosine recombinase XerC">
    <location>
        <begin position="1"/>
        <end position="355"/>
    </location>
</feature>
<feature type="domain" description="Core-binding (CB)" evidence="3">
    <location>
        <begin position="4"/>
        <end position="89"/>
    </location>
</feature>
<feature type="domain" description="Tyr recombinase" evidence="2">
    <location>
        <begin position="158"/>
        <end position="349"/>
    </location>
</feature>
<feature type="region of interest" description="Disordered" evidence="4">
    <location>
        <begin position="138"/>
        <end position="180"/>
    </location>
</feature>
<feature type="compositionally biased region" description="Low complexity" evidence="4">
    <location>
        <begin position="141"/>
        <end position="154"/>
    </location>
</feature>
<feature type="compositionally biased region" description="Basic and acidic residues" evidence="4">
    <location>
        <begin position="168"/>
        <end position="178"/>
    </location>
</feature>
<feature type="active site" evidence="1">
    <location>
        <position position="200"/>
    </location>
</feature>
<feature type="active site" evidence="1">
    <location>
        <position position="224"/>
    </location>
</feature>
<feature type="active site" evidence="1">
    <location>
        <position position="301"/>
    </location>
</feature>
<feature type="active site" evidence="1">
    <location>
        <position position="304"/>
    </location>
</feature>
<feature type="active site" evidence="1">
    <location>
        <position position="327"/>
    </location>
</feature>
<feature type="active site" description="O-(3'-phospho-DNA)-tyrosine intermediate" evidence="1">
    <location>
        <position position="336"/>
    </location>
</feature>
<reference key="1">
    <citation type="journal article" date="2008" name="Proc. Natl. Acad. Sci. U.S.A.">
        <title>The genome sequence of Bifidobacterium longum subsp. infantis reveals adaptations for milk utilization within the infant microbiome.</title>
        <authorList>
            <person name="Sela D.A."/>
            <person name="Chapman J."/>
            <person name="Adeuya A."/>
            <person name="Kim J.H."/>
            <person name="Chen F."/>
            <person name="Whitehead T.R."/>
            <person name="Lapidus A."/>
            <person name="Rokhsar D.S."/>
            <person name="Lebrilla C.B."/>
            <person name="German J.B."/>
            <person name="Price N.P."/>
            <person name="Richardson P.M."/>
            <person name="Mills D.A."/>
        </authorList>
    </citation>
    <scope>NUCLEOTIDE SEQUENCE [LARGE SCALE GENOMIC DNA]</scope>
    <source>
        <strain>ATCC 15697 / DSM 20088 / JCM 1222 / NCTC 11817 / S12</strain>
    </source>
</reference>
<reference key="2">
    <citation type="journal article" date="2011" name="Nature">
        <title>Bifidobacteria can protect from enteropathogenic infection through production of acetate.</title>
        <authorList>
            <person name="Fukuda S."/>
            <person name="Toh H."/>
            <person name="Hase K."/>
            <person name="Oshima K."/>
            <person name="Nakanishi Y."/>
            <person name="Yoshimura K."/>
            <person name="Tobe T."/>
            <person name="Clarke J.M."/>
            <person name="Topping D.L."/>
            <person name="Suzuki T."/>
            <person name="Taylor T.D."/>
            <person name="Itoh K."/>
            <person name="Kikuchi J."/>
            <person name="Morita H."/>
            <person name="Hattori M."/>
            <person name="Ohno H."/>
        </authorList>
    </citation>
    <scope>NUCLEOTIDE SEQUENCE [LARGE SCALE GENOMIC DNA]</scope>
    <source>
        <strain>ATCC 15697 / DSM 20088 / JCM 1222 / NCTC 11817 / S12</strain>
    </source>
</reference>